<organism>
    <name type="scientific">Escherichia coli O157:H7</name>
    <dbReference type="NCBI Taxonomy" id="83334"/>
    <lineage>
        <taxon>Bacteria</taxon>
        <taxon>Pseudomonadati</taxon>
        <taxon>Pseudomonadota</taxon>
        <taxon>Gammaproteobacteria</taxon>
        <taxon>Enterobacterales</taxon>
        <taxon>Enterobacteriaceae</taxon>
        <taxon>Escherichia</taxon>
    </lineage>
</organism>
<name>YHBS_ECO57</name>
<sequence>MLIRVEIPIDAPGIDALLRRSFESDAEAKLVHDLREDGFLTLGLVATDDEGQVIGYVAFSPVDVQGEDLQWVGMAPLAVDEKYRGQGLARQLVYEGLDSLNEFGYAAVVTLGDPALYSRFGFELAAHHDLRCRWPGTESAFQVHRLADDALNGVTGLVEYHEHFNRF</sequence>
<protein>
    <recommendedName>
        <fullName>Uncharacterized N-acetyltransferase YhbS</fullName>
        <ecNumber>2.3.1.-</ecNumber>
    </recommendedName>
</protein>
<comment type="similarity">
    <text evidence="2">Belongs to the acetyltransferase family.</text>
</comment>
<accession>P63419</accession>
<accession>P45473</accession>
<reference key="1">
    <citation type="journal article" date="2001" name="Nature">
        <title>Genome sequence of enterohaemorrhagic Escherichia coli O157:H7.</title>
        <authorList>
            <person name="Perna N.T."/>
            <person name="Plunkett G. III"/>
            <person name="Burland V."/>
            <person name="Mau B."/>
            <person name="Glasner J.D."/>
            <person name="Rose D.J."/>
            <person name="Mayhew G.F."/>
            <person name="Evans P.S."/>
            <person name="Gregor J."/>
            <person name="Kirkpatrick H.A."/>
            <person name="Posfai G."/>
            <person name="Hackett J."/>
            <person name="Klink S."/>
            <person name="Boutin A."/>
            <person name="Shao Y."/>
            <person name="Miller L."/>
            <person name="Grotbeck E.J."/>
            <person name="Davis N.W."/>
            <person name="Lim A."/>
            <person name="Dimalanta E.T."/>
            <person name="Potamousis K."/>
            <person name="Apodaca J."/>
            <person name="Anantharaman T.S."/>
            <person name="Lin J."/>
            <person name="Yen G."/>
            <person name="Schwartz D.C."/>
            <person name="Welch R.A."/>
            <person name="Blattner F.R."/>
        </authorList>
    </citation>
    <scope>NUCLEOTIDE SEQUENCE [LARGE SCALE GENOMIC DNA]</scope>
    <source>
        <strain>O157:H7 / EDL933 / ATCC 700927 / EHEC</strain>
    </source>
</reference>
<reference key="2">
    <citation type="journal article" date="2001" name="DNA Res.">
        <title>Complete genome sequence of enterohemorrhagic Escherichia coli O157:H7 and genomic comparison with a laboratory strain K-12.</title>
        <authorList>
            <person name="Hayashi T."/>
            <person name="Makino K."/>
            <person name="Ohnishi M."/>
            <person name="Kurokawa K."/>
            <person name="Ishii K."/>
            <person name="Yokoyama K."/>
            <person name="Han C.-G."/>
            <person name="Ohtsubo E."/>
            <person name="Nakayama K."/>
            <person name="Murata T."/>
            <person name="Tanaka M."/>
            <person name="Tobe T."/>
            <person name="Iida T."/>
            <person name="Takami H."/>
            <person name="Honda T."/>
            <person name="Sasakawa C."/>
            <person name="Ogasawara N."/>
            <person name="Yasunaga T."/>
            <person name="Kuhara S."/>
            <person name="Shiba T."/>
            <person name="Hattori M."/>
            <person name="Shinagawa H."/>
        </authorList>
    </citation>
    <scope>NUCLEOTIDE SEQUENCE [LARGE SCALE GENOMIC DNA]</scope>
    <source>
        <strain>O157:H7 / Sakai / RIMD 0509952 / EHEC</strain>
    </source>
</reference>
<gene>
    <name type="primary">yhbS</name>
    <name type="ordered locus">Z4517</name>
    <name type="ordered locus">ECs4037</name>
</gene>
<evidence type="ECO:0000255" key="1">
    <source>
        <dbReference type="PROSITE-ProRule" id="PRU00532"/>
    </source>
</evidence>
<evidence type="ECO:0000305" key="2"/>
<dbReference type="EC" id="2.3.1.-"/>
<dbReference type="EMBL" id="AE005174">
    <property type="protein sequence ID" value="AAG58292.1"/>
    <property type="molecule type" value="Genomic_DNA"/>
</dbReference>
<dbReference type="EMBL" id="BA000007">
    <property type="protein sequence ID" value="BAB37460.1"/>
    <property type="molecule type" value="Genomic_DNA"/>
</dbReference>
<dbReference type="PIR" id="E91133">
    <property type="entry name" value="E91133"/>
</dbReference>
<dbReference type="PIR" id="H85978">
    <property type="entry name" value="H85978"/>
</dbReference>
<dbReference type="RefSeq" id="NP_312064.1">
    <property type="nucleotide sequence ID" value="NC_002695.1"/>
</dbReference>
<dbReference type="RefSeq" id="WP_000908554.1">
    <property type="nucleotide sequence ID" value="NZ_VOAI01000014.1"/>
</dbReference>
<dbReference type="SMR" id="P63419"/>
<dbReference type="STRING" id="155864.Z4517"/>
<dbReference type="GeneID" id="916114"/>
<dbReference type="KEGG" id="ece:Z4517"/>
<dbReference type="KEGG" id="ecs:ECs_4037"/>
<dbReference type="PATRIC" id="fig|386585.9.peg.4216"/>
<dbReference type="eggNOG" id="COG3153">
    <property type="taxonomic scope" value="Bacteria"/>
</dbReference>
<dbReference type="HOGENOM" id="CLU_081840_2_1_6"/>
<dbReference type="OMA" id="TRCHIGD"/>
<dbReference type="Proteomes" id="UP000000558">
    <property type="component" value="Chromosome"/>
</dbReference>
<dbReference type="Proteomes" id="UP000002519">
    <property type="component" value="Chromosome"/>
</dbReference>
<dbReference type="GO" id="GO:0016747">
    <property type="term" value="F:acyltransferase activity, transferring groups other than amino-acyl groups"/>
    <property type="evidence" value="ECO:0007669"/>
    <property type="project" value="InterPro"/>
</dbReference>
<dbReference type="CDD" id="cd04301">
    <property type="entry name" value="NAT_SF"/>
    <property type="match status" value="1"/>
</dbReference>
<dbReference type="FunFam" id="3.40.630.30:FF:000008">
    <property type="entry name" value="Acetyltransferase, GNAT family"/>
    <property type="match status" value="1"/>
</dbReference>
<dbReference type="Gene3D" id="3.40.630.30">
    <property type="match status" value="1"/>
</dbReference>
<dbReference type="InterPro" id="IPR016181">
    <property type="entry name" value="Acyl_CoA_acyltransferase"/>
</dbReference>
<dbReference type="InterPro" id="IPR000182">
    <property type="entry name" value="GNAT_dom"/>
</dbReference>
<dbReference type="Pfam" id="PF00583">
    <property type="entry name" value="Acetyltransf_1"/>
    <property type="match status" value="1"/>
</dbReference>
<dbReference type="SUPFAM" id="SSF55729">
    <property type="entry name" value="Acyl-CoA N-acyltransferases (Nat)"/>
    <property type="match status" value="1"/>
</dbReference>
<dbReference type="PROSITE" id="PS51186">
    <property type="entry name" value="GNAT"/>
    <property type="match status" value="1"/>
</dbReference>
<proteinExistence type="inferred from homology"/>
<keyword id="KW-0012">Acyltransferase</keyword>
<keyword id="KW-1185">Reference proteome</keyword>
<keyword id="KW-0808">Transferase</keyword>
<feature type="chain" id="PRO_0000074612" description="Uncharacterized N-acetyltransferase YhbS">
    <location>
        <begin position="1"/>
        <end position="167"/>
    </location>
</feature>
<feature type="domain" description="N-acetyltransferase" evidence="1">
    <location>
        <begin position="1"/>
        <end position="148"/>
    </location>
</feature>